<accession>Q3YZ12</accession>
<keyword id="KW-0058">Aromatic hydrocarbons catabolism</keyword>
<keyword id="KW-0520">NAD</keyword>
<keyword id="KW-0560">Oxidoreductase</keyword>
<keyword id="KW-1185">Reference proteome</keyword>
<protein>
    <recommendedName>
        <fullName evidence="1">3-phenylpropionate-dihydrodiol/cinnamic acid-dihydrodiol dehydrogenase</fullName>
        <ecNumber evidence="1">1.3.1.87</ecNumber>
    </recommendedName>
    <alternativeName>
        <fullName evidence="1">2,3-dihydroxy-2,3-dihydrophenylpropionate dehydrogenase</fullName>
    </alternativeName>
    <alternativeName>
        <fullName evidence="1">3-(cis-5,6-dihydroxycyclohexa-1,3-dien-1-yl)propanoate dehydrogenase</fullName>
    </alternativeName>
    <alternativeName>
        <fullName evidence="1">CI-dihydrodiol dehydrogenase</fullName>
    </alternativeName>
    <alternativeName>
        <fullName evidence="1">Cis-3-(2-carboxyethenyl)-3,5-cyclohexadiene-1,2-diol dehydrogenase</fullName>
    </alternativeName>
    <alternativeName>
        <fullName evidence="1">Cis-3-(2-carboxyethyl)-3,5-cyclohexadiene-1,2-diol dehydrogenase</fullName>
    </alternativeName>
    <alternativeName>
        <fullName evidence="1">PP-dihydrodiol dehydrogenase</fullName>
    </alternativeName>
</protein>
<dbReference type="EC" id="1.3.1.87" evidence="1"/>
<dbReference type="EMBL" id="CP000038">
    <property type="protein sequence ID" value="AAZ89250.1"/>
    <property type="molecule type" value="Genomic_DNA"/>
</dbReference>
<dbReference type="RefSeq" id="WP_001281374.1">
    <property type="nucleotide sequence ID" value="NC_007384.1"/>
</dbReference>
<dbReference type="SMR" id="Q3YZ12"/>
<dbReference type="GeneID" id="93774595"/>
<dbReference type="KEGG" id="ssn:SSON_2623"/>
<dbReference type="HOGENOM" id="CLU_010194_1_0_6"/>
<dbReference type="UniPathway" id="UPA00714"/>
<dbReference type="Proteomes" id="UP000002529">
    <property type="component" value="Chromosome"/>
</dbReference>
<dbReference type="GO" id="GO:0018498">
    <property type="term" value="F:2,3-dihydroxy-2,3-dihydro-phenylpropionate dehydrogenase activity"/>
    <property type="evidence" value="ECO:0007669"/>
    <property type="project" value="UniProtKB-UniRule"/>
</dbReference>
<dbReference type="GO" id="GO:0019380">
    <property type="term" value="P:3-phenylpropionate catabolic process"/>
    <property type="evidence" value="ECO:0007669"/>
    <property type="project" value="UniProtKB-UniRule"/>
</dbReference>
<dbReference type="CDD" id="cd05348">
    <property type="entry name" value="BphB-like_SDR_c"/>
    <property type="match status" value="1"/>
</dbReference>
<dbReference type="FunFam" id="3.40.50.720:FF:000151">
    <property type="entry name" value="3-phenylpropionate-dihydrodiol/cinnamic acid-dihydrodiol dehydrogenase"/>
    <property type="match status" value="1"/>
</dbReference>
<dbReference type="Gene3D" id="3.40.50.720">
    <property type="entry name" value="NAD(P)-binding Rossmann-like Domain"/>
    <property type="match status" value="1"/>
</dbReference>
<dbReference type="HAMAP" id="MF_01647">
    <property type="entry name" value="HcaB"/>
    <property type="match status" value="1"/>
</dbReference>
<dbReference type="InterPro" id="IPR047950">
    <property type="entry name" value="BphB-like_SDR"/>
</dbReference>
<dbReference type="InterPro" id="IPR023643">
    <property type="entry name" value="Dihydrodiol_DH_HcaB"/>
</dbReference>
<dbReference type="InterPro" id="IPR036291">
    <property type="entry name" value="NAD(P)-bd_dom_sf"/>
</dbReference>
<dbReference type="InterPro" id="IPR020904">
    <property type="entry name" value="Sc_DH/Rdtase_CS"/>
</dbReference>
<dbReference type="InterPro" id="IPR002347">
    <property type="entry name" value="SDR_fam"/>
</dbReference>
<dbReference type="NCBIfam" id="NF042950">
    <property type="entry name" value="3PPDhyd_Dh_HcaB"/>
    <property type="match status" value="1"/>
</dbReference>
<dbReference type="NCBIfam" id="NF004849">
    <property type="entry name" value="PRK06200.1"/>
    <property type="match status" value="1"/>
</dbReference>
<dbReference type="PANTHER" id="PTHR43943:SF17">
    <property type="entry name" value="3-PHENYLPROPIONATE-DIHYDRODIOL_CINNAMIC ACID-DIHYDRODIOL DEHYDROGENASE"/>
    <property type="match status" value="1"/>
</dbReference>
<dbReference type="PANTHER" id="PTHR43943">
    <property type="entry name" value="DEHYDROGENASE/REDUCTASE (SDR FAMILY) MEMBER 4"/>
    <property type="match status" value="1"/>
</dbReference>
<dbReference type="Pfam" id="PF00106">
    <property type="entry name" value="adh_short"/>
    <property type="match status" value="1"/>
</dbReference>
<dbReference type="PRINTS" id="PR00081">
    <property type="entry name" value="GDHRDH"/>
</dbReference>
<dbReference type="PRINTS" id="PR00080">
    <property type="entry name" value="SDRFAMILY"/>
</dbReference>
<dbReference type="SUPFAM" id="SSF51735">
    <property type="entry name" value="NAD(P)-binding Rossmann-fold domains"/>
    <property type="match status" value="1"/>
</dbReference>
<dbReference type="PROSITE" id="PS00061">
    <property type="entry name" value="ADH_SHORT"/>
    <property type="match status" value="1"/>
</dbReference>
<gene>
    <name evidence="1" type="primary">hcaB</name>
    <name type="ordered locus">SSON_2623</name>
</gene>
<comment type="function">
    <text evidence="1">Converts 3-phenylpropionate-dihydrodiol (PP-dihydrodiol) and cinnamic acid-dihydrodiol (CI-dihydrodiol) into 3-(2,3-dihydroxylphenyl)propanoic acid (DHPP) and 2,3-dihydroxicinnamic acid (DHCI), respectively.</text>
</comment>
<comment type="catalytic activity">
    <reaction evidence="1">
        <text>3-(cis-5,6-dihydroxycyclohexa-1,3-dien-1-yl)propanoate + NAD(+) = 3-(2,3-dihydroxyphenyl)propanoate + NADH + H(+)</text>
        <dbReference type="Rhea" id="RHEA:25062"/>
        <dbReference type="ChEBI" id="CHEBI:15378"/>
        <dbReference type="ChEBI" id="CHEBI:46951"/>
        <dbReference type="ChEBI" id="CHEBI:57540"/>
        <dbReference type="ChEBI" id="CHEBI:57945"/>
        <dbReference type="ChEBI" id="CHEBI:60087"/>
        <dbReference type="EC" id="1.3.1.87"/>
    </reaction>
</comment>
<comment type="catalytic activity">
    <reaction evidence="1">
        <text>(2E)-3-(cis-5,6-dihydroxycyclohexa-1,3-dien-1-yl)prop-2-enoate + NAD(+) = (2E)-3-(2,3-dihydroxyphenyl)prop-2-enoate + NADH + H(+)</text>
        <dbReference type="Rhea" id="RHEA:25066"/>
        <dbReference type="ChEBI" id="CHEBI:15378"/>
        <dbReference type="ChEBI" id="CHEBI:57540"/>
        <dbReference type="ChEBI" id="CHEBI:57945"/>
        <dbReference type="ChEBI" id="CHEBI:58642"/>
        <dbReference type="ChEBI" id="CHEBI:61451"/>
        <dbReference type="EC" id="1.3.1.87"/>
    </reaction>
</comment>
<comment type="pathway">
    <text evidence="1">Aromatic compound metabolism; 3-phenylpropanoate degradation.</text>
</comment>
<comment type="similarity">
    <text evidence="1">Belongs to the short-chain dehydrogenases/reductases (SDR) family.</text>
</comment>
<feature type="chain" id="PRO_0000333767" description="3-phenylpropionate-dihydrodiol/cinnamic acid-dihydrodiol dehydrogenase">
    <location>
        <begin position="1"/>
        <end position="270"/>
    </location>
</feature>
<feature type="active site" description="Proton acceptor" evidence="1">
    <location>
        <position position="156"/>
    </location>
</feature>
<feature type="binding site" evidence="1">
    <location>
        <begin position="10"/>
        <end position="34"/>
    </location>
    <ligand>
        <name>NAD(+)</name>
        <dbReference type="ChEBI" id="CHEBI:57540"/>
    </ligand>
</feature>
<feature type="binding site" evidence="1">
    <location>
        <position position="143"/>
    </location>
    <ligand>
        <name>substrate</name>
    </ligand>
</feature>
<proteinExistence type="inferred from homology"/>
<sequence length="270" mass="28440">MSDLHNESIFITGGGSGLGLALVERFIEEGAQVATLELSAAKVASLRQRFGEHILAVEGNVTCYADYQRAVDQILTRSGKLDCFIGNAGIWDHNASLVNTPAETLETGFHELFNVNVLGYLLGAKACAPALIASEGSMIFTLSNAARYPGGGGPLYTASKHAATGLIRQLAYELAPKVRVNGVGPCGMASDLRGPQALGQSETSIMQSLTPEKIAAILPLQFFPQPADFTGPYVMLASRRNNRALSGVMINADAGLAIRGIRHVAAGLDL</sequence>
<reference key="1">
    <citation type="journal article" date="2005" name="Nucleic Acids Res.">
        <title>Genome dynamics and diversity of Shigella species, the etiologic agents of bacillary dysentery.</title>
        <authorList>
            <person name="Yang F."/>
            <person name="Yang J."/>
            <person name="Zhang X."/>
            <person name="Chen L."/>
            <person name="Jiang Y."/>
            <person name="Yan Y."/>
            <person name="Tang X."/>
            <person name="Wang J."/>
            <person name="Xiong Z."/>
            <person name="Dong J."/>
            <person name="Xue Y."/>
            <person name="Zhu Y."/>
            <person name="Xu X."/>
            <person name="Sun L."/>
            <person name="Chen S."/>
            <person name="Nie H."/>
            <person name="Peng J."/>
            <person name="Xu J."/>
            <person name="Wang Y."/>
            <person name="Yuan Z."/>
            <person name="Wen Y."/>
            <person name="Yao Z."/>
            <person name="Shen Y."/>
            <person name="Qiang B."/>
            <person name="Hou Y."/>
            <person name="Yu J."/>
            <person name="Jin Q."/>
        </authorList>
    </citation>
    <scope>NUCLEOTIDE SEQUENCE [LARGE SCALE GENOMIC DNA]</scope>
    <source>
        <strain>Ss046</strain>
    </source>
</reference>
<organism>
    <name type="scientific">Shigella sonnei (strain Ss046)</name>
    <dbReference type="NCBI Taxonomy" id="300269"/>
    <lineage>
        <taxon>Bacteria</taxon>
        <taxon>Pseudomonadati</taxon>
        <taxon>Pseudomonadota</taxon>
        <taxon>Gammaproteobacteria</taxon>
        <taxon>Enterobacterales</taxon>
        <taxon>Enterobacteriaceae</taxon>
        <taxon>Shigella</taxon>
    </lineage>
</organism>
<evidence type="ECO:0000255" key="1">
    <source>
        <dbReference type="HAMAP-Rule" id="MF_01647"/>
    </source>
</evidence>
<name>HCAB_SHISS</name>